<proteinExistence type="inferred from homology"/>
<protein>
    <recommendedName>
        <fullName evidence="1">LexA repressor</fullName>
        <ecNumber evidence="1">3.4.21.88</ecNumber>
    </recommendedName>
</protein>
<name>LEXA_LACH4</name>
<gene>
    <name evidence="1" type="primary">lexA</name>
    <name type="ordered locus">lhv_1364</name>
</gene>
<accession>A8YVS7</accession>
<keyword id="KW-0068">Autocatalytic cleavage</keyword>
<keyword id="KW-0227">DNA damage</keyword>
<keyword id="KW-0234">DNA repair</keyword>
<keyword id="KW-0235">DNA replication</keyword>
<keyword id="KW-0238">DNA-binding</keyword>
<keyword id="KW-0378">Hydrolase</keyword>
<keyword id="KW-0678">Repressor</keyword>
<keyword id="KW-0742">SOS response</keyword>
<keyword id="KW-0804">Transcription</keyword>
<keyword id="KW-0805">Transcription regulation</keyword>
<comment type="function">
    <text evidence="1">Represses a number of genes involved in the response to DNA damage (SOS response), including recA and lexA. In the presence of single-stranded DNA, RecA interacts with LexA causing an autocatalytic cleavage which disrupts the DNA-binding part of LexA, leading to derepression of the SOS regulon and eventually DNA repair.</text>
</comment>
<comment type="catalytic activity">
    <reaction evidence="1">
        <text>Hydrolysis of Ala-|-Gly bond in repressor LexA.</text>
        <dbReference type="EC" id="3.4.21.88"/>
    </reaction>
</comment>
<comment type="subunit">
    <text evidence="1">Homodimer.</text>
</comment>
<comment type="similarity">
    <text evidence="1">Belongs to the peptidase S24 family.</text>
</comment>
<dbReference type="EC" id="3.4.21.88" evidence="1"/>
<dbReference type="EMBL" id="CP000517">
    <property type="protein sequence ID" value="ABX27362.1"/>
    <property type="molecule type" value="Genomic_DNA"/>
</dbReference>
<dbReference type="RefSeq" id="WP_012212013.1">
    <property type="nucleotide sequence ID" value="NC_010080.1"/>
</dbReference>
<dbReference type="SMR" id="A8YVS7"/>
<dbReference type="MEROPS" id="S24.001"/>
<dbReference type="KEGG" id="lhe:lhv_1364"/>
<dbReference type="eggNOG" id="COG1974">
    <property type="taxonomic scope" value="Bacteria"/>
</dbReference>
<dbReference type="HOGENOM" id="CLU_066192_45_1_9"/>
<dbReference type="Proteomes" id="UP000000790">
    <property type="component" value="Chromosome"/>
</dbReference>
<dbReference type="GO" id="GO:0003677">
    <property type="term" value="F:DNA binding"/>
    <property type="evidence" value="ECO:0007669"/>
    <property type="project" value="UniProtKB-UniRule"/>
</dbReference>
<dbReference type="GO" id="GO:0004252">
    <property type="term" value="F:serine-type endopeptidase activity"/>
    <property type="evidence" value="ECO:0007669"/>
    <property type="project" value="UniProtKB-UniRule"/>
</dbReference>
<dbReference type="GO" id="GO:0006281">
    <property type="term" value="P:DNA repair"/>
    <property type="evidence" value="ECO:0007669"/>
    <property type="project" value="UniProtKB-UniRule"/>
</dbReference>
<dbReference type="GO" id="GO:0006260">
    <property type="term" value="P:DNA replication"/>
    <property type="evidence" value="ECO:0007669"/>
    <property type="project" value="UniProtKB-UniRule"/>
</dbReference>
<dbReference type="GO" id="GO:0045892">
    <property type="term" value="P:negative regulation of DNA-templated transcription"/>
    <property type="evidence" value="ECO:0007669"/>
    <property type="project" value="UniProtKB-UniRule"/>
</dbReference>
<dbReference type="GO" id="GO:0006508">
    <property type="term" value="P:proteolysis"/>
    <property type="evidence" value="ECO:0007669"/>
    <property type="project" value="InterPro"/>
</dbReference>
<dbReference type="GO" id="GO:0009432">
    <property type="term" value="P:SOS response"/>
    <property type="evidence" value="ECO:0007669"/>
    <property type="project" value="UniProtKB-UniRule"/>
</dbReference>
<dbReference type="CDD" id="cd00090">
    <property type="entry name" value="HTH_ARSR"/>
    <property type="match status" value="1"/>
</dbReference>
<dbReference type="CDD" id="cd06529">
    <property type="entry name" value="S24_LexA-like"/>
    <property type="match status" value="1"/>
</dbReference>
<dbReference type="FunFam" id="2.10.109.10:FF:000001">
    <property type="entry name" value="LexA repressor"/>
    <property type="match status" value="1"/>
</dbReference>
<dbReference type="Gene3D" id="2.10.109.10">
    <property type="entry name" value="Umud Fragment, subunit A"/>
    <property type="match status" value="1"/>
</dbReference>
<dbReference type="Gene3D" id="1.10.10.10">
    <property type="entry name" value="Winged helix-like DNA-binding domain superfamily/Winged helix DNA-binding domain"/>
    <property type="match status" value="1"/>
</dbReference>
<dbReference type="HAMAP" id="MF_00015">
    <property type="entry name" value="LexA"/>
    <property type="match status" value="1"/>
</dbReference>
<dbReference type="InterPro" id="IPR011991">
    <property type="entry name" value="ArsR-like_HTH"/>
</dbReference>
<dbReference type="InterPro" id="IPR006200">
    <property type="entry name" value="LexA"/>
</dbReference>
<dbReference type="InterPro" id="IPR039418">
    <property type="entry name" value="LexA-like"/>
</dbReference>
<dbReference type="InterPro" id="IPR036286">
    <property type="entry name" value="LexA/Signal_pep-like_sf"/>
</dbReference>
<dbReference type="InterPro" id="IPR006199">
    <property type="entry name" value="LexA_DNA-bd_dom"/>
</dbReference>
<dbReference type="InterPro" id="IPR050077">
    <property type="entry name" value="LexA_repressor"/>
</dbReference>
<dbReference type="InterPro" id="IPR006197">
    <property type="entry name" value="Peptidase_S24_LexA"/>
</dbReference>
<dbReference type="InterPro" id="IPR015927">
    <property type="entry name" value="Peptidase_S24_S26A/B/C"/>
</dbReference>
<dbReference type="InterPro" id="IPR036388">
    <property type="entry name" value="WH-like_DNA-bd_sf"/>
</dbReference>
<dbReference type="InterPro" id="IPR036390">
    <property type="entry name" value="WH_DNA-bd_sf"/>
</dbReference>
<dbReference type="NCBIfam" id="TIGR00498">
    <property type="entry name" value="lexA"/>
    <property type="match status" value="1"/>
</dbReference>
<dbReference type="PANTHER" id="PTHR33516">
    <property type="entry name" value="LEXA REPRESSOR"/>
    <property type="match status" value="1"/>
</dbReference>
<dbReference type="PANTHER" id="PTHR33516:SF2">
    <property type="entry name" value="LEXA REPRESSOR-RELATED"/>
    <property type="match status" value="1"/>
</dbReference>
<dbReference type="Pfam" id="PF01726">
    <property type="entry name" value="LexA_DNA_bind"/>
    <property type="match status" value="1"/>
</dbReference>
<dbReference type="Pfam" id="PF00717">
    <property type="entry name" value="Peptidase_S24"/>
    <property type="match status" value="1"/>
</dbReference>
<dbReference type="PRINTS" id="PR00726">
    <property type="entry name" value="LEXASERPTASE"/>
</dbReference>
<dbReference type="SUPFAM" id="SSF51306">
    <property type="entry name" value="LexA/Signal peptidase"/>
    <property type="match status" value="1"/>
</dbReference>
<dbReference type="SUPFAM" id="SSF46785">
    <property type="entry name" value="Winged helix' DNA-binding domain"/>
    <property type="match status" value="1"/>
</dbReference>
<organism>
    <name type="scientific">Lactobacillus helveticus (strain DPC 4571)</name>
    <dbReference type="NCBI Taxonomy" id="405566"/>
    <lineage>
        <taxon>Bacteria</taxon>
        <taxon>Bacillati</taxon>
        <taxon>Bacillota</taxon>
        <taxon>Bacilli</taxon>
        <taxon>Lactobacillales</taxon>
        <taxon>Lactobacillaceae</taxon>
        <taxon>Lactobacillus</taxon>
    </lineage>
</organism>
<feature type="chain" id="PRO_1000070965" description="LexA repressor">
    <location>
        <begin position="1"/>
        <end position="208"/>
    </location>
</feature>
<feature type="DNA-binding region" description="H-T-H motif" evidence="1">
    <location>
        <begin position="30"/>
        <end position="50"/>
    </location>
</feature>
<feature type="active site" description="For autocatalytic cleavage activity" evidence="1">
    <location>
        <position position="129"/>
    </location>
</feature>
<feature type="active site" description="For autocatalytic cleavage activity" evidence="1">
    <location>
        <position position="167"/>
    </location>
</feature>
<feature type="site" description="Cleavage; by autolysis" evidence="1">
    <location>
        <begin position="93"/>
        <end position="94"/>
    </location>
</feature>
<reference key="1">
    <citation type="journal article" date="2008" name="J. Bacteriol.">
        <title>Genome sequence of Lactobacillus helveticus: an organism distinguished by selective gene loss and IS element expansion.</title>
        <authorList>
            <person name="Callanan M."/>
            <person name="Kaleta P."/>
            <person name="O'Callaghan J."/>
            <person name="O'Sullivan O."/>
            <person name="Jordan K."/>
            <person name="McAuliffe O."/>
            <person name="Sangrador-Vegas A."/>
            <person name="Slattery L."/>
            <person name="Fitzgerald G.F."/>
            <person name="Beresford T."/>
            <person name="Ross R.P."/>
        </authorList>
    </citation>
    <scope>NUCLEOTIDE SEQUENCE [LARGE SCALE GENOMIC DNA]</scope>
    <source>
        <strain>DPC 4571</strain>
    </source>
</reference>
<evidence type="ECO:0000255" key="1">
    <source>
        <dbReference type="HAMAP-Rule" id="MF_00015"/>
    </source>
</evidence>
<sequence length="208" mass="23177">MSKKNSDTKQLEILRYIYDTVDHRGFPPTVREICAAVKLSSTSTVHGHLARLERKGLLIKDATKPRALEITDEGKKELGIKPKRIPVIGVVAAGHPILAVQDIDEYFPLPPDLENDAGELFMLKIHGESMINAGILNGDNVIVKKQNTANNGEIVVAMTDENEATVKRFYKEKDHYRLQPENDTMAPIILPEVTILGKVVGLYRNNID</sequence>